<reference key="1">
    <citation type="journal article" date="2002" name="Environ. Microbiol.">
        <title>Complete genome sequence and comparative analysis of the metabolically versatile Pseudomonas putida KT2440.</title>
        <authorList>
            <person name="Nelson K.E."/>
            <person name="Weinel C."/>
            <person name="Paulsen I.T."/>
            <person name="Dodson R.J."/>
            <person name="Hilbert H."/>
            <person name="Martins dos Santos V.A.P."/>
            <person name="Fouts D.E."/>
            <person name="Gill S.R."/>
            <person name="Pop M."/>
            <person name="Holmes M."/>
            <person name="Brinkac L.M."/>
            <person name="Beanan M.J."/>
            <person name="DeBoy R.T."/>
            <person name="Daugherty S.C."/>
            <person name="Kolonay J.F."/>
            <person name="Madupu R."/>
            <person name="Nelson W.C."/>
            <person name="White O."/>
            <person name="Peterson J.D."/>
            <person name="Khouri H.M."/>
            <person name="Hance I."/>
            <person name="Chris Lee P."/>
            <person name="Holtzapple E.K."/>
            <person name="Scanlan D."/>
            <person name="Tran K."/>
            <person name="Moazzez A."/>
            <person name="Utterback T.R."/>
            <person name="Rizzo M."/>
            <person name="Lee K."/>
            <person name="Kosack D."/>
            <person name="Moestl D."/>
            <person name="Wedler H."/>
            <person name="Lauber J."/>
            <person name="Stjepandic D."/>
            <person name="Hoheisel J."/>
            <person name="Straetz M."/>
            <person name="Heim S."/>
            <person name="Kiewitz C."/>
            <person name="Eisen J.A."/>
            <person name="Timmis K.N."/>
            <person name="Duesterhoeft A."/>
            <person name="Tuemmler B."/>
            <person name="Fraser C.M."/>
        </authorList>
    </citation>
    <scope>NUCLEOTIDE SEQUENCE [LARGE SCALE GENOMIC DNA]</scope>
    <source>
        <strain>ATCC 47054 / DSM 6125 / CFBP 8728 / NCIMB 11950 / KT2440</strain>
    </source>
</reference>
<evidence type="ECO:0000255" key="1">
    <source>
        <dbReference type="HAMAP-Rule" id="MF_00601"/>
    </source>
</evidence>
<keyword id="KW-1283">Bacterial microcompartment</keyword>
<keyword id="KW-0846">Cobalamin</keyword>
<keyword id="KW-0170">Cobalt</keyword>
<keyword id="KW-0456">Lyase</keyword>
<keyword id="KW-1185">Reference proteome</keyword>
<protein>
    <recommendedName>
        <fullName evidence="1">Ethanolamine ammonia-lyase small subunit</fullName>
        <shortName evidence="1">EAL small subunit</shortName>
        <ecNumber evidence="1">4.3.1.7</ecNumber>
    </recommendedName>
</protein>
<organism>
    <name type="scientific">Pseudomonas putida (strain ATCC 47054 / DSM 6125 / CFBP 8728 / NCIMB 11950 / KT2440)</name>
    <dbReference type="NCBI Taxonomy" id="160488"/>
    <lineage>
        <taxon>Bacteria</taxon>
        <taxon>Pseudomonadati</taxon>
        <taxon>Pseudomonadota</taxon>
        <taxon>Gammaproteobacteria</taxon>
        <taxon>Pseudomonadales</taxon>
        <taxon>Pseudomonadaceae</taxon>
        <taxon>Pseudomonas</taxon>
    </lineage>
</organism>
<accession>Q88QF2</accession>
<comment type="function">
    <text evidence="1">Catalyzes the deamination of various vicinal amino-alcohols to oxo compounds. Allows this organism to utilize ethanolamine as the sole source of nitrogen and carbon in the presence of external vitamin B12.</text>
</comment>
<comment type="catalytic activity">
    <reaction evidence="1">
        <text>ethanolamine = acetaldehyde + NH4(+)</text>
        <dbReference type="Rhea" id="RHEA:15313"/>
        <dbReference type="ChEBI" id="CHEBI:15343"/>
        <dbReference type="ChEBI" id="CHEBI:28938"/>
        <dbReference type="ChEBI" id="CHEBI:57603"/>
        <dbReference type="EC" id="4.3.1.7"/>
    </reaction>
</comment>
<comment type="cofactor">
    <cofactor evidence="1">
        <name>adenosylcob(III)alamin</name>
        <dbReference type="ChEBI" id="CHEBI:18408"/>
    </cofactor>
    <text evidence="1">Binds between the large and small subunits.</text>
</comment>
<comment type="pathway">
    <text evidence="1">Amine and polyamine degradation; ethanolamine degradation.</text>
</comment>
<comment type="subunit">
    <text evidence="1">The basic unit is a heterodimer which dimerizes to form tetramers. The heterotetramers trimerize; 6 large subunits form a core ring with 6 small subunits projecting outwards.</text>
</comment>
<comment type="subcellular location">
    <subcellularLocation>
        <location evidence="1">Bacterial microcompartment</location>
    </subcellularLocation>
</comment>
<comment type="similarity">
    <text evidence="1">Belongs to the EutC family.</text>
</comment>
<proteinExistence type="inferred from homology"/>
<feature type="chain" id="PRO_0000205998" description="Ethanolamine ammonia-lyase small subunit">
    <location>
        <begin position="1"/>
        <end position="272"/>
    </location>
</feature>
<feature type="binding site" evidence="1">
    <location>
        <position position="161"/>
    </location>
    <ligand>
        <name>adenosylcob(III)alamin</name>
        <dbReference type="ChEBI" id="CHEBI:18408"/>
    </ligand>
</feature>
<feature type="binding site" evidence="1">
    <location>
        <position position="182"/>
    </location>
    <ligand>
        <name>adenosylcob(III)alamin</name>
        <dbReference type="ChEBI" id="CHEBI:18408"/>
    </ligand>
</feature>
<feature type="binding site" evidence="1">
    <location>
        <position position="211"/>
    </location>
    <ligand>
        <name>adenosylcob(III)alamin</name>
        <dbReference type="ChEBI" id="CHEBI:18408"/>
    </ligand>
</feature>
<name>EUTC_PSEPK</name>
<sequence length="272" mass="29573">MDHRTPTPDNPWLALRNLTPARIALGRTGTSLPTGAQLDFQFAHAQARDAVHLAFDHAGLASQLSDRGRESLVLHSAASDRHQYLQRPDLGRRLNEDSIATLRQHAQANPGGVDLAIVVADGLSALAVHRHTLPFLTRFDEQAAADGWTCAPVVLVQQGRVAVADEVGELLGARMTVMLIGERPGLSSPDSLGLYFTYAPKVGLTDAYRNCISNIRLEGLSYGMAAHRLLYLMREACRRQLSGVNLKDEAEVHSLENEDSANQKGNFLLGKG</sequence>
<gene>
    <name evidence="1" type="primary">eutC</name>
    <name type="ordered locus">PP_0542</name>
</gene>
<dbReference type="EC" id="4.3.1.7" evidence="1"/>
<dbReference type="EMBL" id="AE015451">
    <property type="protein sequence ID" value="AAN66169.1"/>
    <property type="molecule type" value="Genomic_DNA"/>
</dbReference>
<dbReference type="RefSeq" id="NP_742705.1">
    <property type="nucleotide sequence ID" value="NC_002947.4"/>
</dbReference>
<dbReference type="RefSeq" id="WP_010951820.1">
    <property type="nucleotide sequence ID" value="NZ_CP169744.1"/>
</dbReference>
<dbReference type="SMR" id="Q88QF2"/>
<dbReference type="STRING" id="160488.PP_0542"/>
<dbReference type="PaxDb" id="160488-PP_0542"/>
<dbReference type="GeneID" id="83677866"/>
<dbReference type="KEGG" id="ppu:PP_0542"/>
<dbReference type="PATRIC" id="fig|160488.4.peg.579"/>
<dbReference type="eggNOG" id="COG4302">
    <property type="taxonomic scope" value="Bacteria"/>
</dbReference>
<dbReference type="HOGENOM" id="CLU_068224_1_0_6"/>
<dbReference type="OrthoDB" id="114248at2"/>
<dbReference type="PhylomeDB" id="Q88QF2"/>
<dbReference type="BioCyc" id="PPUT160488:G1G01-592-MONOMER"/>
<dbReference type="UniPathway" id="UPA00560"/>
<dbReference type="Proteomes" id="UP000000556">
    <property type="component" value="Chromosome"/>
</dbReference>
<dbReference type="GO" id="GO:0009350">
    <property type="term" value="C:ethanolamine ammonia-lyase complex"/>
    <property type="evidence" value="ECO:0007669"/>
    <property type="project" value="UniProtKB-UniRule"/>
</dbReference>
<dbReference type="GO" id="GO:0031471">
    <property type="term" value="C:ethanolamine degradation polyhedral organelle"/>
    <property type="evidence" value="ECO:0007669"/>
    <property type="project" value="UniProtKB-UniRule"/>
</dbReference>
<dbReference type="GO" id="GO:0031419">
    <property type="term" value="F:cobalamin binding"/>
    <property type="evidence" value="ECO:0007669"/>
    <property type="project" value="UniProtKB-UniRule"/>
</dbReference>
<dbReference type="GO" id="GO:0008851">
    <property type="term" value="F:ethanolamine ammonia-lyase activity"/>
    <property type="evidence" value="ECO:0007669"/>
    <property type="project" value="UniProtKB-UniRule"/>
</dbReference>
<dbReference type="GO" id="GO:0006520">
    <property type="term" value="P:amino acid metabolic process"/>
    <property type="evidence" value="ECO:0007669"/>
    <property type="project" value="InterPro"/>
</dbReference>
<dbReference type="GO" id="GO:0046336">
    <property type="term" value="P:ethanolamine catabolic process"/>
    <property type="evidence" value="ECO:0007669"/>
    <property type="project" value="UniProtKB-UniRule"/>
</dbReference>
<dbReference type="FunFam" id="1.10.30.40:FF:000001">
    <property type="entry name" value="Ethanolamine ammonia-lyase light chain"/>
    <property type="match status" value="1"/>
</dbReference>
<dbReference type="FunFam" id="3.40.50.11240:FF:000001">
    <property type="entry name" value="Ethanolamine ammonia-lyase light chain"/>
    <property type="match status" value="1"/>
</dbReference>
<dbReference type="Gene3D" id="3.40.50.11240">
    <property type="entry name" value="Ethanolamine ammonia-lyase light chain (EutC)"/>
    <property type="match status" value="1"/>
</dbReference>
<dbReference type="Gene3D" id="1.10.30.40">
    <property type="entry name" value="Ethanolamine ammonia-lyase light chain (EutC), N-terminal domain"/>
    <property type="match status" value="1"/>
</dbReference>
<dbReference type="HAMAP" id="MF_00601">
    <property type="entry name" value="EutC"/>
    <property type="match status" value="1"/>
</dbReference>
<dbReference type="InterPro" id="IPR009246">
    <property type="entry name" value="EutC"/>
</dbReference>
<dbReference type="InterPro" id="IPR042251">
    <property type="entry name" value="EutC_C"/>
</dbReference>
<dbReference type="InterPro" id="IPR042255">
    <property type="entry name" value="EutC_N"/>
</dbReference>
<dbReference type="NCBIfam" id="NF003971">
    <property type="entry name" value="PRK05465.1"/>
    <property type="match status" value="1"/>
</dbReference>
<dbReference type="PANTHER" id="PTHR39330">
    <property type="entry name" value="ETHANOLAMINE AMMONIA-LYASE LIGHT CHAIN"/>
    <property type="match status" value="1"/>
</dbReference>
<dbReference type="PANTHER" id="PTHR39330:SF1">
    <property type="entry name" value="ETHANOLAMINE AMMONIA-LYASE SMALL SUBUNIT"/>
    <property type="match status" value="1"/>
</dbReference>
<dbReference type="Pfam" id="PF05985">
    <property type="entry name" value="EutC"/>
    <property type="match status" value="1"/>
</dbReference>
<dbReference type="PIRSF" id="PIRSF018982">
    <property type="entry name" value="EutC"/>
    <property type="match status" value="1"/>
</dbReference>